<keyword id="KW-0002">3D-structure</keyword>
<keyword id="KW-0963">Cytoplasm</keyword>
<keyword id="KW-1185">Reference proteome</keyword>
<keyword id="KW-0687">Ribonucleoprotein</keyword>
<keyword id="KW-0689">Ribosomal protein</keyword>
<dbReference type="EMBL" id="AL590444">
    <property type="protein sequence ID" value="CAD25261.1"/>
    <property type="molecule type" value="Genomic_DNA"/>
</dbReference>
<dbReference type="RefSeq" id="NP_584757.1">
    <property type="nucleotide sequence ID" value="NM_001041107.1"/>
</dbReference>
<dbReference type="PDB" id="7QEP">
    <property type="method" value="EM"/>
    <property type="resolution" value="2.70 A"/>
    <property type="chains" value="N2=1-112"/>
</dbReference>
<dbReference type="PDBsum" id="7QEP"/>
<dbReference type="EMDB" id="EMD-13936"/>
<dbReference type="SMR" id="Q8SS49"/>
<dbReference type="STRING" id="284813.Q8SS49"/>
<dbReference type="GeneID" id="858905"/>
<dbReference type="KEGG" id="ecu:ECU04_0740"/>
<dbReference type="VEuPathDB" id="MicrosporidiaDB:ECU04_0740"/>
<dbReference type="HOGENOM" id="CLU_2145832_0_0_1"/>
<dbReference type="InParanoid" id="Q8SS49"/>
<dbReference type="OMA" id="DCTHPAS"/>
<dbReference type="OrthoDB" id="10259820at2759"/>
<dbReference type="Proteomes" id="UP000000819">
    <property type="component" value="Chromosome IV"/>
</dbReference>
<dbReference type="GO" id="GO:0005737">
    <property type="term" value="C:cytoplasm"/>
    <property type="evidence" value="ECO:0007669"/>
    <property type="project" value="UniProtKB-SubCell"/>
</dbReference>
<dbReference type="GO" id="GO:1990904">
    <property type="term" value="C:ribonucleoprotein complex"/>
    <property type="evidence" value="ECO:0007669"/>
    <property type="project" value="UniProtKB-KW"/>
</dbReference>
<dbReference type="GO" id="GO:0005840">
    <property type="term" value="C:ribosome"/>
    <property type="evidence" value="ECO:0007669"/>
    <property type="project" value="UniProtKB-KW"/>
</dbReference>
<dbReference type="GO" id="GO:0003723">
    <property type="term" value="F:RNA binding"/>
    <property type="evidence" value="ECO:0007669"/>
    <property type="project" value="TreeGrafter"/>
</dbReference>
<dbReference type="GO" id="GO:0003735">
    <property type="term" value="F:structural constituent of ribosome"/>
    <property type="evidence" value="ECO:0007669"/>
    <property type="project" value="InterPro"/>
</dbReference>
<dbReference type="GO" id="GO:0002181">
    <property type="term" value="P:cytoplasmic translation"/>
    <property type="evidence" value="ECO:0007669"/>
    <property type="project" value="TreeGrafter"/>
</dbReference>
<dbReference type="Gene3D" id="3.30.1360.210">
    <property type="match status" value="1"/>
</dbReference>
<dbReference type="InterPro" id="IPR002671">
    <property type="entry name" value="Ribosomal_eL22"/>
</dbReference>
<dbReference type="InterPro" id="IPR038526">
    <property type="entry name" value="Ribosomal_eL22_sf"/>
</dbReference>
<dbReference type="PANTHER" id="PTHR10064">
    <property type="entry name" value="60S RIBOSOMAL PROTEIN L22"/>
    <property type="match status" value="1"/>
</dbReference>
<dbReference type="PANTHER" id="PTHR10064:SF0">
    <property type="entry name" value="FI24544P1-RELATED"/>
    <property type="match status" value="1"/>
</dbReference>
<dbReference type="Pfam" id="PF01776">
    <property type="entry name" value="Ribosomal_L22e"/>
    <property type="match status" value="1"/>
</dbReference>
<name>RL22_ENCCU</name>
<feature type="chain" id="PRO_0000383128" description="Large ribosomal subunit protein eL22">
    <location>
        <begin position="1"/>
        <end position="112"/>
    </location>
</feature>
<sequence>MTAASEKTTRRFTIDCTKPASDSLISPSDLGAFLQQKIKCYTGKKEKLLHINANGNIVEVDVTGGFIGKQGLKWQIGRFLHMKKLRAFIKIFAQGLDGFELRYINVEEGKEE</sequence>
<protein>
    <recommendedName>
        <fullName evidence="3">Large ribosomal subunit protein eL22</fullName>
    </recommendedName>
    <alternativeName>
        <fullName>60S ribosomal protein L22</fullName>
    </alternativeName>
</protein>
<gene>
    <name type="primary">RPL22</name>
    <name type="ordered locus">ECU04_0740</name>
</gene>
<accession>Q8SS49</accession>
<comment type="subunit">
    <text evidence="1">Component of the large ribosomal subunit.</text>
</comment>
<comment type="subcellular location">
    <subcellularLocation>
        <location evidence="1">Cytoplasm</location>
    </subcellularLocation>
</comment>
<comment type="developmental stage">
    <text evidence="2">Expressed in late sporogonial stages.</text>
</comment>
<comment type="similarity">
    <text evidence="3">Belongs to the eukaryotic ribosomal protein eL22 family.</text>
</comment>
<organism>
    <name type="scientific">Encephalitozoon cuniculi (strain GB-M1)</name>
    <name type="common">Microsporidian parasite</name>
    <dbReference type="NCBI Taxonomy" id="284813"/>
    <lineage>
        <taxon>Eukaryota</taxon>
        <taxon>Fungi</taxon>
        <taxon>Fungi incertae sedis</taxon>
        <taxon>Microsporidia</taxon>
        <taxon>Unikaryonidae</taxon>
        <taxon>Encephalitozoon</taxon>
    </lineage>
</organism>
<reference key="1">
    <citation type="journal article" date="2001" name="Nature">
        <title>Genome sequence and gene compaction of the eukaryote parasite Encephalitozoon cuniculi.</title>
        <authorList>
            <person name="Katinka M.D."/>
            <person name="Duprat S."/>
            <person name="Cornillot E."/>
            <person name="Metenier G."/>
            <person name="Thomarat F."/>
            <person name="Prensier G."/>
            <person name="Barbe V."/>
            <person name="Peyretaillade E."/>
            <person name="Brottier P."/>
            <person name="Wincker P."/>
            <person name="Delbac F."/>
            <person name="El Alaoui H."/>
            <person name="Peyret P."/>
            <person name="Saurin W."/>
            <person name="Gouy M."/>
            <person name="Weissenbach J."/>
            <person name="Vivares C.P."/>
        </authorList>
    </citation>
    <scope>NUCLEOTIDE SEQUENCE [LARGE SCALE GENOMIC DNA]</scope>
    <source>
        <strain>GB-M1</strain>
    </source>
</reference>
<reference key="2">
    <citation type="journal article" date="2006" name="Proteomics">
        <title>Proteomic analysis of the eukaryotic parasite Encephalitozoon cuniculi (microsporidia): a reference map for proteins expressed in late sporogonial stages.</title>
        <authorList>
            <person name="Brosson D."/>
            <person name="Kuhn L."/>
            <person name="Delbac F."/>
            <person name="Garin J."/>
            <person name="Vivares C.P."/>
            <person name="Texier C."/>
        </authorList>
    </citation>
    <scope>IDENTIFICATION BY MASS SPECTROMETRY [LARGE SCALE ANALYSIS]</scope>
    <scope>DEVELOPMENTAL STAGE</scope>
</reference>
<proteinExistence type="evidence at protein level"/>
<evidence type="ECO:0000250" key="1"/>
<evidence type="ECO:0000269" key="2">
    <source>
    </source>
</evidence>
<evidence type="ECO:0000305" key="3"/>